<sequence>MSIKLFSLAKELNVGVGSLAGFLRKKGFDVEDNNPNVRIENEEFDLLLTEFGKSLPKGEAERIRKKFVKQKQGTPASAPSAKEETAGMAAKEAQVIATEVPQDMRPRFTIKGKVETEKPAEPVPSPKDKEPDTVREDKPARETAPVKEETKVVPVKEDKPKEEKPKQEEPKREEPKPEEPVQAAPVAKPVEKPVDKPQQPVMTQKPQEAETPPPAQEMEKKEDTEEVFRLKTNTQEPQVKVVGKIDLSSINSSTRPKKKTKEDRQREQNDADGKKKRKRINKAAVDVKKEAAKVSGEQGKRNAGGGNHPSGNKNNNRPAQQQSNASGGRKNNKRQSLPPKVEISDEDVQRQVKETLARLTTKKTSTTLGRGAKYRKDKRDAASRAAQDAMELNSEEQHTLKLTEFVTVSDLSNMMDVPVNEVIATCMSIGMMVGINQRLDAETINIVAEEFGFKTEFVSADLVEAIAPEEDNEEDLVARPPIVTVMGHVDHGKTSLLDRIRNTNVIEGEAGGITQHIGAYGLKLPSGRRITFLDTPGHEAFTAMRARGAKITDIAIIIVAADDDVMPQTVEAINHASAAGVPMVFAINKIDKPAANPERIKEQLANMNYLVEDWGGKYQSQEISAKKGINITELLEKVLLEADILELKANPNRRAIGSIIESSLDKGRGYVSTVMVQNGTLNMGDVVLAGTCHGRIKAMFNERNQRVKQAGPSEPVLILGLNGAPAAGDTFNVLETEQEAREIANRREQLQREQGLRTHKILTLEDISRRRAIGNFQELNLIVKGDVDGSVEALSDSLIRLSTEEIQVNVIHKAVGQISESDVVLAAASSAIIIGFQVRPSVAARKQAETDGVEIRTYSIIYDTIEDIKSAMEGMLSPEIREEVTGSLEVLQTFKISKVGTIAGCMVKEGKVKRTSKVRLIRDGIVIHTGELGSLKRFKDDAKEVVAGLECGLNLAHSNDIQDGDIIEAFDEIEIKKTL</sequence>
<proteinExistence type="inferred from homology"/>
<dbReference type="EMBL" id="AP009380">
    <property type="protein sequence ID" value="BAG32874.1"/>
    <property type="molecule type" value="Genomic_DNA"/>
</dbReference>
<dbReference type="RefSeq" id="WP_012457447.1">
    <property type="nucleotide sequence ID" value="NZ_CP025930.1"/>
</dbReference>
<dbReference type="SMR" id="B2RHM9"/>
<dbReference type="GeneID" id="29255597"/>
<dbReference type="KEGG" id="pgn:PGN_0355"/>
<dbReference type="eggNOG" id="COG0532">
    <property type="taxonomic scope" value="Bacteria"/>
</dbReference>
<dbReference type="eggNOG" id="COG3266">
    <property type="taxonomic scope" value="Bacteria"/>
</dbReference>
<dbReference type="HOGENOM" id="CLU_006301_0_0_10"/>
<dbReference type="OrthoDB" id="9811804at2"/>
<dbReference type="BioCyc" id="PGIN431947:G1G2V-391-MONOMER"/>
<dbReference type="Proteomes" id="UP000008842">
    <property type="component" value="Chromosome"/>
</dbReference>
<dbReference type="GO" id="GO:0005737">
    <property type="term" value="C:cytoplasm"/>
    <property type="evidence" value="ECO:0007669"/>
    <property type="project" value="UniProtKB-SubCell"/>
</dbReference>
<dbReference type="GO" id="GO:0005525">
    <property type="term" value="F:GTP binding"/>
    <property type="evidence" value="ECO:0007669"/>
    <property type="project" value="UniProtKB-KW"/>
</dbReference>
<dbReference type="GO" id="GO:0003924">
    <property type="term" value="F:GTPase activity"/>
    <property type="evidence" value="ECO:0007669"/>
    <property type="project" value="UniProtKB-UniRule"/>
</dbReference>
<dbReference type="GO" id="GO:0003743">
    <property type="term" value="F:translation initiation factor activity"/>
    <property type="evidence" value="ECO:0007669"/>
    <property type="project" value="UniProtKB-UniRule"/>
</dbReference>
<dbReference type="CDD" id="cd01887">
    <property type="entry name" value="IF2_eIF5B"/>
    <property type="match status" value="1"/>
</dbReference>
<dbReference type="CDD" id="cd03702">
    <property type="entry name" value="IF2_mtIF2_II"/>
    <property type="match status" value="1"/>
</dbReference>
<dbReference type="CDD" id="cd03692">
    <property type="entry name" value="mtIF2_IVc"/>
    <property type="match status" value="1"/>
</dbReference>
<dbReference type="FunFam" id="2.40.30.10:FF:000007">
    <property type="entry name" value="Translation initiation factor IF-2"/>
    <property type="match status" value="1"/>
</dbReference>
<dbReference type="FunFam" id="2.40.30.10:FF:000008">
    <property type="entry name" value="Translation initiation factor IF-2"/>
    <property type="match status" value="1"/>
</dbReference>
<dbReference type="FunFam" id="3.40.50.10050:FF:000001">
    <property type="entry name" value="Translation initiation factor IF-2"/>
    <property type="match status" value="1"/>
</dbReference>
<dbReference type="FunFam" id="3.40.50.300:FF:000019">
    <property type="entry name" value="Translation initiation factor IF-2"/>
    <property type="match status" value="1"/>
</dbReference>
<dbReference type="Gene3D" id="3.40.50.300">
    <property type="entry name" value="P-loop containing nucleotide triphosphate hydrolases"/>
    <property type="match status" value="1"/>
</dbReference>
<dbReference type="Gene3D" id="2.40.30.10">
    <property type="entry name" value="Translation factors"/>
    <property type="match status" value="2"/>
</dbReference>
<dbReference type="Gene3D" id="3.40.50.10050">
    <property type="entry name" value="Translation initiation factor IF- 2, domain 3"/>
    <property type="match status" value="1"/>
</dbReference>
<dbReference type="HAMAP" id="MF_00100_B">
    <property type="entry name" value="IF_2_B"/>
    <property type="match status" value="1"/>
</dbReference>
<dbReference type="InterPro" id="IPR053905">
    <property type="entry name" value="EF-G-like_DII"/>
</dbReference>
<dbReference type="InterPro" id="IPR004161">
    <property type="entry name" value="EFTu-like_2"/>
</dbReference>
<dbReference type="InterPro" id="IPR044145">
    <property type="entry name" value="IF2_II"/>
</dbReference>
<dbReference type="InterPro" id="IPR006847">
    <property type="entry name" value="IF2_N"/>
</dbReference>
<dbReference type="InterPro" id="IPR027417">
    <property type="entry name" value="P-loop_NTPase"/>
</dbReference>
<dbReference type="InterPro" id="IPR005225">
    <property type="entry name" value="Small_GTP-bd"/>
</dbReference>
<dbReference type="InterPro" id="IPR000795">
    <property type="entry name" value="T_Tr_GTP-bd_dom"/>
</dbReference>
<dbReference type="InterPro" id="IPR000178">
    <property type="entry name" value="TF_IF2_bacterial-like"/>
</dbReference>
<dbReference type="InterPro" id="IPR015760">
    <property type="entry name" value="TIF_IF2"/>
</dbReference>
<dbReference type="InterPro" id="IPR023115">
    <property type="entry name" value="TIF_IF2_dom3"/>
</dbReference>
<dbReference type="InterPro" id="IPR036925">
    <property type="entry name" value="TIF_IF2_dom3_sf"/>
</dbReference>
<dbReference type="InterPro" id="IPR009000">
    <property type="entry name" value="Transl_B-barrel_sf"/>
</dbReference>
<dbReference type="NCBIfam" id="TIGR00487">
    <property type="entry name" value="IF-2"/>
    <property type="match status" value="1"/>
</dbReference>
<dbReference type="NCBIfam" id="TIGR00231">
    <property type="entry name" value="small_GTP"/>
    <property type="match status" value="1"/>
</dbReference>
<dbReference type="PANTHER" id="PTHR43381:SF5">
    <property type="entry name" value="TR-TYPE G DOMAIN-CONTAINING PROTEIN"/>
    <property type="match status" value="1"/>
</dbReference>
<dbReference type="PANTHER" id="PTHR43381">
    <property type="entry name" value="TRANSLATION INITIATION FACTOR IF-2-RELATED"/>
    <property type="match status" value="1"/>
</dbReference>
<dbReference type="Pfam" id="PF22042">
    <property type="entry name" value="EF-G_D2"/>
    <property type="match status" value="1"/>
</dbReference>
<dbReference type="Pfam" id="PF00009">
    <property type="entry name" value="GTP_EFTU"/>
    <property type="match status" value="1"/>
</dbReference>
<dbReference type="Pfam" id="PF03144">
    <property type="entry name" value="GTP_EFTU_D2"/>
    <property type="match status" value="1"/>
</dbReference>
<dbReference type="Pfam" id="PF11987">
    <property type="entry name" value="IF-2"/>
    <property type="match status" value="1"/>
</dbReference>
<dbReference type="Pfam" id="PF04760">
    <property type="entry name" value="IF2_N"/>
    <property type="match status" value="1"/>
</dbReference>
<dbReference type="SUPFAM" id="SSF52156">
    <property type="entry name" value="Initiation factor IF2/eIF5b, domain 3"/>
    <property type="match status" value="1"/>
</dbReference>
<dbReference type="SUPFAM" id="SSF52540">
    <property type="entry name" value="P-loop containing nucleoside triphosphate hydrolases"/>
    <property type="match status" value="1"/>
</dbReference>
<dbReference type="SUPFAM" id="SSF50447">
    <property type="entry name" value="Translation proteins"/>
    <property type="match status" value="2"/>
</dbReference>
<dbReference type="PROSITE" id="PS51722">
    <property type="entry name" value="G_TR_2"/>
    <property type="match status" value="1"/>
</dbReference>
<dbReference type="PROSITE" id="PS01176">
    <property type="entry name" value="IF2"/>
    <property type="match status" value="1"/>
</dbReference>
<protein>
    <recommendedName>
        <fullName evidence="2">Translation initiation factor IF-2</fullName>
    </recommendedName>
</protein>
<reference key="1">
    <citation type="journal article" date="2008" name="DNA Res.">
        <title>Determination of the genome sequence of Porphyromonas gingivalis strain ATCC 33277 and genomic comparison with strain W83 revealed extensive genome rearrangements in P. gingivalis.</title>
        <authorList>
            <person name="Naito M."/>
            <person name="Hirakawa H."/>
            <person name="Yamashita A."/>
            <person name="Ohara N."/>
            <person name="Shoji M."/>
            <person name="Yukitake H."/>
            <person name="Nakayama K."/>
            <person name="Toh H."/>
            <person name="Yoshimura F."/>
            <person name="Kuhara S."/>
            <person name="Hattori M."/>
            <person name="Hayashi T."/>
            <person name="Nakayama K."/>
        </authorList>
    </citation>
    <scope>NUCLEOTIDE SEQUENCE [LARGE SCALE GENOMIC DNA]</scope>
    <source>
        <strain>ATCC 33277 / DSM 20709 / CIP 103683 / JCM 12257 / NCTC 11834 / 2561</strain>
    </source>
</reference>
<evidence type="ECO:0000250" key="1"/>
<evidence type="ECO:0000255" key="2">
    <source>
        <dbReference type="HAMAP-Rule" id="MF_00100"/>
    </source>
</evidence>
<evidence type="ECO:0000256" key="3">
    <source>
        <dbReference type="SAM" id="MobiDB-lite"/>
    </source>
</evidence>
<gene>
    <name evidence="2" type="primary">infB</name>
    <name type="ordered locus">PGN_0355</name>
</gene>
<keyword id="KW-0963">Cytoplasm</keyword>
<keyword id="KW-0342">GTP-binding</keyword>
<keyword id="KW-0396">Initiation factor</keyword>
<keyword id="KW-0547">Nucleotide-binding</keyword>
<keyword id="KW-0648">Protein biosynthesis</keyword>
<accession>B2RHM9</accession>
<name>IF2_PORG3</name>
<organism>
    <name type="scientific">Porphyromonas gingivalis (strain ATCC 33277 / DSM 20709 / CIP 103683 / JCM 12257 / NCTC 11834 / 2561)</name>
    <dbReference type="NCBI Taxonomy" id="431947"/>
    <lineage>
        <taxon>Bacteria</taxon>
        <taxon>Pseudomonadati</taxon>
        <taxon>Bacteroidota</taxon>
        <taxon>Bacteroidia</taxon>
        <taxon>Bacteroidales</taxon>
        <taxon>Porphyromonadaceae</taxon>
        <taxon>Porphyromonas</taxon>
    </lineage>
</organism>
<comment type="function">
    <text evidence="2">One of the essential components for the initiation of protein synthesis. Protects formylmethionyl-tRNA from spontaneous hydrolysis and promotes its binding to the 30S ribosomal subunits. Also involved in the hydrolysis of GTP during the formation of the 70S ribosomal complex.</text>
</comment>
<comment type="subcellular location">
    <subcellularLocation>
        <location evidence="2">Cytoplasm</location>
    </subcellularLocation>
</comment>
<comment type="similarity">
    <text evidence="2">Belongs to the TRAFAC class translation factor GTPase superfamily. Classic translation factor GTPase family. IF-2 subfamily.</text>
</comment>
<feature type="chain" id="PRO_1000093811" description="Translation initiation factor IF-2">
    <location>
        <begin position="1"/>
        <end position="979"/>
    </location>
</feature>
<feature type="domain" description="tr-type G">
    <location>
        <begin position="478"/>
        <end position="646"/>
    </location>
</feature>
<feature type="region of interest" description="Disordered" evidence="3">
    <location>
        <begin position="68"/>
        <end position="392"/>
    </location>
</feature>
<feature type="region of interest" description="G1" evidence="1">
    <location>
        <begin position="487"/>
        <end position="494"/>
    </location>
</feature>
<feature type="region of interest" description="G2" evidence="1">
    <location>
        <begin position="512"/>
        <end position="516"/>
    </location>
</feature>
<feature type="region of interest" description="G3" evidence="1">
    <location>
        <begin position="534"/>
        <end position="537"/>
    </location>
</feature>
<feature type="region of interest" description="G4" evidence="1">
    <location>
        <begin position="588"/>
        <end position="591"/>
    </location>
</feature>
<feature type="region of interest" description="G5" evidence="1">
    <location>
        <begin position="624"/>
        <end position="626"/>
    </location>
</feature>
<feature type="compositionally biased region" description="Basic and acidic residues" evidence="3">
    <location>
        <begin position="102"/>
        <end position="179"/>
    </location>
</feature>
<feature type="compositionally biased region" description="Basic and acidic residues" evidence="3">
    <location>
        <begin position="217"/>
        <end position="229"/>
    </location>
</feature>
<feature type="compositionally biased region" description="Basic and acidic residues" evidence="3">
    <location>
        <begin position="260"/>
        <end position="273"/>
    </location>
</feature>
<feature type="compositionally biased region" description="Polar residues" evidence="3">
    <location>
        <begin position="309"/>
        <end position="326"/>
    </location>
</feature>
<feature type="compositionally biased region" description="Basic and acidic residues" evidence="3">
    <location>
        <begin position="347"/>
        <end position="356"/>
    </location>
</feature>
<feature type="binding site" evidence="2">
    <location>
        <begin position="487"/>
        <end position="494"/>
    </location>
    <ligand>
        <name>GTP</name>
        <dbReference type="ChEBI" id="CHEBI:37565"/>
    </ligand>
</feature>
<feature type="binding site" evidence="2">
    <location>
        <begin position="534"/>
        <end position="538"/>
    </location>
    <ligand>
        <name>GTP</name>
        <dbReference type="ChEBI" id="CHEBI:37565"/>
    </ligand>
</feature>
<feature type="binding site" evidence="2">
    <location>
        <begin position="588"/>
        <end position="591"/>
    </location>
    <ligand>
        <name>GTP</name>
        <dbReference type="ChEBI" id="CHEBI:37565"/>
    </ligand>
</feature>